<reference key="1">
    <citation type="journal article" date="2002" name="Nature">
        <title>Complete genome sequence of the model actinomycete Streptomyces coelicolor A3(2).</title>
        <authorList>
            <person name="Bentley S.D."/>
            <person name="Chater K.F."/>
            <person name="Cerdeno-Tarraga A.-M."/>
            <person name="Challis G.L."/>
            <person name="Thomson N.R."/>
            <person name="James K.D."/>
            <person name="Harris D.E."/>
            <person name="Quail M.A."/>
            <person name="Kieser H."/>
            <person name="Harper D."/>
            <person name="Bateman A."/>
            <person name="Brown S."/>
            <person name="Chandra G."/>
            <person name="Chen C.W."/>
            <person name="Collins M."/>
            <person name="Cronin A."/>
            <person name="Fraser A."/>
            <person name="Goble A."/>
            <person name="Hidalgo J."/>
            <person name="Hornsby T."/>
            <person name="Howarth S."/>
            <person name="Huang C.-H."/>
            <person name="Kieser T."/>
            <person name="Larke L."/>
            <person name="Murphy L.D."/>
            <person name="Oliver K."/>
            <person name="O'Neil S."/>
            <person name="Rabbinowitsch E."/>
            <person name="Rajandream M.A."/>
            <person name="Rutherford K.M."/>
            <person name="Rutter S."/>
            <person name="Seeger K."/>
            <person name="Saunders D."/>
            <person name="Sharp S."/>
            <person name="Squares R."/>
            <person name="Squares S."/>
            <person name="Taylor K."/>
            <person name="Warren T."/>
            <person name="Wietzorrek A."/>
            <person name="Woodward J.R."/>
            <person name="Barrell B.G."/>
            <person name="Parkhill J."/>
            <person name="Hopwood D.A."/>
        </authorList>
    </citation>
    <scope>NUCLEOTIDE SEQUENCE [LARGE SCALE GENOMIC DNA]</scope>
    <source>
        <strain>ATCC BAA-471 / A3(2) / M145</strain>
    </source>
</reference>
<reference key="2">
    <citation type="journal article" date="2001" name="Mol. Microbiol.">
        <title>Mutational analysis of RsrA, a zinc-binding anti-sigma factor with a thiol-disulphide redox switch.</title>
        <authorList>
            <person name="Paget M.S."/>
            <person name="Bae J.B."/>
            <person name="Hahn M.Y."/>
            <person name="Li W."/>
            <person name="Kleanthous C."/>
            <person name="Roe J.H."/>
            <person name="Buttner M.J."/>
        </authorList>
    </citation>
    <scope>INDUCTION</scope>
    <source>
        <strain>ATCC BAA-471 / A3(2) / M145</strain>
    </source>
</reference>
<dbReference type="EMBL" id="AL939107">
    <property type="protein sequence ID" value="CAB62676.1"/>
    <property type="molecule type" value="Genomic_DNA"/>
</dbReference>
<dbReference type="RefSeq" id="NP_625184.1">
    <property type="nucleotide sequence ID" value="NC_003888.3"/>
</dbReference>
<dbReference type="SMR" id="Q9RD25"/>
<dbReference type="FunCoup" id="Q9RD25">
    <property type="interactions" value="41"/>
</dbReference>
<dbReference type="STRING" id="100226.gene:17758468"/>
<dbReference type="PaxDb" id="100226-SCO0885"/>
<dbReference type="KEGG" id="sco:SCO0885"/>
<dbReference type="PATRIC" id="fig|100226.15.peg.876"/>
<dbReference type="eggNOG" id="COG0526">
    <property type="taxonomic scope" value="Bacteria"/>
</dbReference>
<dbReference type="HOGENOM" id="CLU_090389_10_4_11"/>
<dbReference type="InParanoid" id="Q9RD25"/>
<dbReference type="OrthoDB" id="9790390at2"/>
<dbReference type="PhylomeDB" id="Q9RD25"/>
<dbReference type="Proteomes" id="UP000001973">
    <property type="component" value="Chromosome"/>
</dbReference>
<dbReference type="GO" id="GO:0005737">
    <property type="term" value="C:cytoplasm"/>
    <property type="evidence" value="ECO:0000318"/>
    <property type="project" value="GO_Central"/>
</dbReference>
<dbReference type="GO" id="GO:0005829">
    <property type="term" value="C:cytosol"/>
    <property type="evidence" value="ECO:0000318"/>
    <property type="project" value="GO_Central"/>
</dbReference>
<dbReference type="GO" id="GO:0015035">
    <property type="term" value="F:protein-disulfide reductase activity"/>
    <property type="evidence" value="ECO:0000318"/>
    <property type="project" value="GO_Central"/>
</dbReference>
<dbReference type="CDD" id="cd02947">
    <property type="entry name" value="TRX_family"/>
    <property type="match status" value="1"/>
</dbReference>
<dbReference type="FunFam" id="3.40.30.10:FF:000155">
    <property type="entry name" value="Thioredoxin"/>
    <property type="match status" value="1"/>
</dbReference>
<dbReference type="Gene3D" id="3.40.30.10">
    <property type="entry name" value="Glutaredoxin"/>
    <property type="match status" value="1"/>
</dbReference>
<dbReference type="InterPro" id="IPR005746">
    <property type="entry name" value="Thioredoxin"/>
</dbReference>
<dbReference type="InterPro" id="IPR036249">
    <property type="entry name" value="Thioredoxin-like_sf"/>
</dbReference>
<dbReference type="InterPro" id="IPR017937">
    <property type="entry name" value="Thioredoxin_CS"/>
</dbReference>
<dbReference type="InterPro" id="IPR013766">
    <property type="entry name" value="Thioredoxin_domain"/>
</dbReference>
<dbReference type="NCBIfam" id="TIGR01068">
    <property type="entry name" value="thioredoxin"/>
    <property type="match status" value="1"/>
</dbReference>
<dbReference type="PANTHER" id="PTHR45663">
    <property type="entry name" value="GEO12009P1"/>
    <property type="match status" value="1"/>
</dbReference>
<dbReference type="PANTHER" id="PTHR45663:SF40">
    <property type="entry name" value="THIOREDOXIN 2"/>
    <property type="match status" value="1"/>
</dbReference>
<dbReference type="Pfam" id="PF00085">
    <property type="entry name" value="Thioredoxin"/>
    <property type="match status" value="1"/>
</dbReference>
<dbReference type="PRINTS" id="PR00421">
    <property type="entry name" value="THIOREDOXIN"/>
</dbReference>
<dbReference type="SUPFAM" id="SSF52833">
    <property type="entry name" value="Thioredoxin-like"/>
    <property type="match status" value="1"/>
</dbReference>
<dbReference type="PROSITE" id="PS00194">
    <property type="entry name" value="THIOREDOXIN_1"/>
    <property type="match status" value="1"/>
</dbReference>
<dbReference type="PROSITE" id="PS51352">
    <property type="entry name" value="THIOREDOXIN_2"/>
    <property type="match status" value="1"/>
</dbReference>
<proteinExistence type="evidence at transcript level"/>
<keyword id="KW-0963">Cytoplasm</keyword>
<keyword id="KW-1015">Disulfide bond</keyword>
<keyword id="KW-0249">Electron transport</keyword>
<keyword id="KW-0676">Redox-active center</keyword>
<keyword id="KW-1185">Reference proteome</keyword>
<keyword id="KW-0813">Transport</keyword>
<organism>
    <name type="scientific">Streptomyces coelicolor (strain ATCC BAA-471 / A3(2) / M145)</name>
    <dbReference type="NCBI Taxonomy" id="100226"/>
    <lineage>
        <taxon>Bacteria</taxon>
        <taxon>Bacillati</taxon>
        <taxon>Actinomycetota</taxon>
        <taxon>Actinomycetes</taxon>
        <taxon>Kitasatosporales</taxon>
        <taxon>Streptomycetaceae</taxon>
        <taxon>Streptomyces</taxon>
        <taxon>Streptomyces albidoflavus group</taxon>
    </lineage>
</organism>
<evidence type="ECO:0000250" key="1"/>
<evidence type="ECO:0000255" key="2">
    <source>
        <dbReference type="PROSITE-ProRule" id="PRU00691"/>
    </source>
</evidence>
<evidence type="ECO:0000256" key="3">
    <source>
        <dbReference type="SAM" id="MobiDB-lite"/>
    </source>
</evidence>
<evidence type="ECO:0000269" key="4">
    <source>
    </source>
</evidence>
<evidence type="ECO:0000305" key="5"/>
<name>THIO2_STRCO</name>
<comment type="function">
    <text evidence="1">Component of the thioredoxin-thioredoxin reductase system. Participates in various redox reactions through the reversible oxidation of its active center dithiol to a disulfide and catalyzes dithiol-disulfide exchange reactions (By similarity).</text>
</comment>
<comment type="subcellular location">
    <subcellularLocation>
        <location evidence="1">Cytoplasm</location>
    </subcellularLocation>
</comment>
<comment type="induction">
    <text evidence="4">Expressed from 2 promoters, 1 of which (trxCp1) is under control of SigR. Dramatically but transiently induced by the thiol-oxidizing agent diamide. In an rsrA mutant expression is constitutive and uninduced by diamide.</text>
</comment>
<comment type="similarity">
    <text evidence="5">Belongs to the thioredoxin family.</text>
</comment>
<sequence length="134" mass="14589">MTSTVELTKENFDQTVTDNEFVLIDFWAEWCGPCKQFGPVYEKAAEANPDLVFGKVDTEAQPELAQAFGISSIPTLMIVREQVAVFAQPGALPEAALTDVIGQARKLDMDEVRKAVAEQQAQAGQNGQEGQEGQ</sequence>
<gene>
    <name type="primary">trxC</name>
    <name type="ordered locus">SCO0885</name>
</gene>
<accession>Q9RD25</accession>
<feature type="chain" id="PRO_0000423655" description="Putative thioredoxin 2">
    <location>
        <begin position="1"/>
        <end position="134"/>
    </location>
</feature>
<feature type="domain" description="Thioredoxin" evidence="2">
    <location>
        <begin position="3"/>
        <end position="106"/>
    </location>
</feature>
<feature type="region of interest" description="Disordered" evidence="3">
    <location>
        <begin position="115"/>
        <end position="134"/>
    </location>
</feature>
<feature type="compositionally biased region" description="Low complexity" evidence="3">
    <location>
        <begin position="117"/>
        <end position="134"/>
    </location>
</feature>
<feature type="disulfide bond" description="Redox-active" evidence="2">
    <location>
        <begin position="31"/>
        <end position="34"/>
    </location>
</feature>
<protein>
    <recommendedName>
        <fullName>Putative thioredoxin 2</fullName>
        <shortName>Trx-2</shortName>
    </recommendedName>
</protein>